<proteinExistence type="uncertain"/>
<evidence type="ECO:0000250" key="1">
    <source>
        <dbReference type="UniProtKB" id="Q1XH05"/>
    </source>
</evidence>
<evidence type="ECO:0000250" key="2">
    <source>
        <dbReference type="UniProtKB" id="Q75I94"/>
    </source>
</evidence>
<evidence type="ECO:0000250" key="3">
    <source>
        <dbReference type="UniProtKB" id="Q7XSK0"/>
    </source>
</evidence>
<evidence type="ECO:0000255" key="4"/>
<evidence type="ECO:0000255" key="5">
    <source>
        <dbReference type="PROSITE-ProRule" id="PRU00498"/>
    </source>
</evidence>
<evidence type="ECO:0000305" key="6"/>
<name>BGL23_ORYSJ</name>
<protein>
    <recommendedName>
        <fullName>Putative beta-glucosidase 23</fullName>
        <shortName>Os5bglu23</shortName>
        <ecNumber evidence="2">3.2.1.21</ecNumber>
    </recommendedName>
</protein>
<gene>
    <name type="primary">BGLU23</name>
    <name type="ordered locus">Os05g0366800</name>
    <name type="ordered locus">LOC_Os05g30390</name>
    <name type="ORF">OJ1393_A07.1</name>
    <name type="ORF">OSJNBa0090H02.13</name>
</gene>
<sequence>MAACTSSLVSLLLLLLLLLLLLVAGEATAEAALNFTRQDFPGGLRRRHICLPGFRDADSITFPRDIESLTCGTHMCLDPRGSHTSVTQCHGECHRRNVIESQSRFRRTYEGATGEDGRTPSIWDTFTHSGRMADNSTGDRAAAGYHKYKEDVKLMSDTGLEAYRFSISWSRLIPRGRGPINPKGLEYYNDLIDKLVKRGEICDCSMGIEIHVTLYHLDFPQALQDEYNGWLSPRIIEDFTAYADVCFREFGDLVRHWTTVGEPNVLSIAGYDSGVIPPCRCSPPFGTSCAAGDSTVEPYFAAHNSILAHASAVRLYWDKYQAKQKGVVGTNIYSFWPYPLSRSCADIDAVQRVLDFTIGWILDPLVYGDYPEIMKKQAGSRIPSFTKEQSELIRGSADFIGINHYKSLYVSDGSNREKAGLRDYNADMAAHFRGFGQFDKEDSLNDTERVEYLSSYMGGTLAALRNGANVKGYFVWSFLDVFELFAGYHSPFGLHHVDFEDPSLPRQPKLSAQWYSKFLRSEIGINIEKMVSPDEHEHAYYQ</sequence>
<dbReference type="EC" id="3.2.1.21" evidence="2"/>
<dbReference type="EMBL" id="AC104279">
    <property type="protein sequence ID" value="AAT38010.1"/>
    <property type="status" value="ALT_SEQ"/>
    <property type="molecule type" value="Genomic_DNA"/>
</dbReference>
<dbReference type="EMBL" id="AC137618">
    <property type="protein sequence ID" value="AAV31360.1"/>
    <property type="status" value="ALT_SEQ"/>
    <property type="molecule type" value="Genomic_DNA"/>
</dbReference>
<dbReference type="EMBL" id="AP014961">
    <property type="status" value="NOT_ANNOTATED_CDS"/>
    <property type="molecule type" value="Genomic_DNA"/>
</dbReference>
<dbReference type="SMR" id="Q6L597"/>
<dbReference type="FunCoup" id="Q6L597">
    <property type="interactions" value="312"/>
</dbReference>
<dbReference type="STRING" id="39947.Q6L597"/>
<dbReference type="CAZy" id="GH1">
    <property type="family name" value="Glycoside Hydrolase Family 1"/>
</dbReference>
<dbReference type="GlyCosmos" id="Q6L597">
    <property type="glycosylation" value="3 sites, No reported glycans"/>
</dbReference>
<dbReference type="PaxDb" id="39947-Q6L597"/>
<dbReference type="eggNOG" id="KOG0626">
    <property type="taxonomic scope" value="Eukaryota"/>
</dbReference>
<dbReference type="InParanoid" id="Q6L597"/>
<dbReference type="Proteomes" id="UP000000763">
    <property type="component" value="Chromosome 5"/>
</dbReference>
<dbReference type="Proteomes" id="UP000059680">
    <property type="component" value="Chromosome 5"/>
</dbReference>
<dbReference type="GO" id="GO:0033907">
    <property type="term" value="F:beta-D-fucosidase activity"/>
    <property type="evidence" value="ECO:0007669"/>
    <property type="project" value="UniProtKB-ARBA"/>
</dbReference>
<dbReference type="GO" id="GO:0004565">
    <property type="term" value="F:beta-galactosidase activity"/>
    <property type="evidence" value="ECO:0007669"/>
    <property type="project" value="UniProtKB-ARBA"/>
</dbReference>
<dbReference type="GO" id="GO:0008422">
    <property type="term" value="F:beta-glucosidase activity"/>
    <property type="evidence" value="ECO:0000318"/>
    <property type="project" value="GO_Central"/>
</dbReference>
<dbReference type="GO" id="GO:0005975">
    <property type="term" value="P:carbohydrate metabolic process"/>
    <property type="evidence" value="ECO:0007669"/>
    <property type="project" value="InterPro"/>
</dbReference>
<dbReference type="Gene3D" id="3.20.20.80">
    <property type="entry name" value="Glycosidases"/>
    <property type="match status" value="1"/>
</dbReference>
<dbReference type="InterPro" id="IPR001360">
    <property type="entry name" value="Glyco_hydro_1"/>
</dbReference>
<dbReference type="InterPro" id="IPR017853">
    <property type="entry name" value="Glycoside_hydrolase_SF"/>
</dbReference>
<dbReference type="PANTHER" id="PTHR10353:SF29">
    <property type="entry name" value="BETA-GLUCOSIDASE 11"/>
    <property type="match status" value="1"/>
</dbReference>
<dbReference type="PANTHER" id="PTHR10353">
    <property type="entry name" value="GLYCOSYL HYDROLASE"/>
    <property type="match status" value="1"/>
</dbReference>
<dbReference type="Pfam" id="PF00232">
    <property type="entry name" value="Glyco_hydro_1"/>
    <property type="match status" value="2"/>
</dbReference>
<dbReference type="PRINTS" id="PR00131">
    <property type="entry name" value="GLHYDRLASE1"/>
</dbReference>
<dbReference type="SUPFAM" id="SSF51445">
    <property type="entry name" value="(Trans)glycosidases"/>
    <property type="match status" value="1"/>
</dbReference>
<feature type="signal peptide" evidence="4">
    <location>
        <begin position="1"/>
        <end position="29"/>
    </location>
</feature>
<feature type="chain" id="PRO_0000390340" description="Putative beta-glucosidase 23">
    <location>
        <begin position="30"/>
        <end position="542"/>
    </location>
</feature>
<feature type="active site" description="Proton donor" evidence="3">
    <location>
        <position position="262"/>
    </location>
</feature>
<feature type="binding site" evidence="3">
    <location>
        <position position="88"/>
    </location>
    <ligand>
        <name>a beta-D-glucoside</name>
        <dbReference type="ChEBI" id="CHEBI:22798"/>
    </ligand>
</feature>
<feature type="binding site" evidence="3">
    <location>
        <position position="216"/>
    </location>
    <ligand>
        <name>a beta-D-glucoside</name>
        <dbReference type="ChEBI" id="CHEBI:22798"/>
    </ligand>
</feature>
<feature type="binding site" evidence="3">
    <location>
        <position position="405"/>
    </location>
    <ligand>
        <name>a beta-D-glucoside</name>
        <dbReference type="ChEBI" id="CHEBI:22798"/>
    </ligand>
</feature>
<feature type="binding site" evidence="3">
    <location>
        <position position="476"/>
    </location>
    <ligand>
        <name>a beta-D-glucoside</name>
        <dbReference type="ChEBI" id="CHEBI:22798"/>
    </ligand>
</feature>
<feature type="binding site" evidence="1">
    <location>
        <position position="492"/>
    </location>
    <ligand>
        <name>a beta-D-glucoside</name>
        <dbReference type="ChEBI" id="CHEBI:22798"/>
    </ligand>
</feature>
<feature type="glycosylation site" description="N-linked (GlcNAc...) asparagine" evidence="5">
    <location>
        <position position="34"/>
    </location>
</feature>
<feature type="glycosylation site" description="N-linked (GlcNAc...) asparagine" evidence="5">
    <location>
        <position position="135"/>
    </location>
</feature>
<feature type="glycosylation site" description="N-linked (GlcNAc...) asparagine" evidence="5">
    <location>
        <position position="445"/>
    </location>
</feature>
<feature type="disulfide bond" evidence="3">
    <location>
        <begin position="281"/>
        <end position="289"/>
    </location>
</feature>
<keyword id="KW-1015">Disulfide bond</keyword>
<keyword id="KW-0325">Glycoprotein</keyword>
<keyword id="KW-0326">Glycosidase</keyword>
<keyword id="KW-0378">Hydrolase</keyword>
<keyword id="KW-1185">Reference proteome</keyword>
<keyword id="KW-0732">Signal</keyword>
<comment type="catalytic activity">
    <reaction evidence="2">
        <text>Hydrolysis of terminal, non-reducing beta-D-glucosyl residues with release of beta-D-glucose.</text>
        <dbReference type="EC" id="3.2.1.21"/>
    </reaction>
</comment>
<comment type="similarity">
    <text evidence="6">Belongs to the glycosyl hydrolase 1 family.</text>
</comment>
<comment type="caution">
    <text evidence="6">Could be the product of a pseudogene.</text>
</comment>
<comment type="sequence caution" evidence="6">
    <conflict type="erroneous gene model prediction">
        <sequence resource="EMBL-CDS" id="AAT38010"/>
    </conflict>
</comment>
<comment type="sequence caution" evidence="6">
    <conflict type="erroneous gene model prediction">
        <sequence resource="EMBL-CDS" id="AAV31360"/>
    </conflict>
</comment>
<accession>Q6L597</accession>
<organism>
    <name type="scientific">Oryza sativa subsp. japonica</name>
    <name type="common">Rice</name>
    <dbReference type="NCBI Taxonomy" id="39947"/>
    <lineage>
        <taxon>Eukaryota</taxon>
        <taxon>Viridiplantae</taxon>
        <taxon>Streptophyta</taxon>
        <taxon>Embryophyta</taxon>
        <taxon>Tracheophyta</taxon>
        <taxon>Spermatophyta</taxon>
        <taxon>Magnoliopsida</taxon>
        <taxon>Liliopsida</taxon>
        <taxon>Poales</taxon>
        <taxon>Poaceae</taxon>
        <taxon>BOP clade</taxon>
        <taxon>Oryzoideae</taxon>
        <taxon>Oryzeae</taxon>
        <taxon>Oryzinae</taxon>
        <taxon>Oryza</taxon>
        <taxon>Oryza sativa</taxon>
    </lineage>
</organism>
<reference key="1">
    <citation type="journal article" date="2005" name="Mol. Genet. Genomics">
        <title>A fine physical map of the rice chromosome 5.</title>
        <authorList>
            <person name="Cheng C.-H."/>
            <person name="Chung M.C."/>
            <person name="Liu S.-M."/>
            <person name="Chen S.-K."/>
            <person name="Kao F.Y."/>
            <person name="Lin S.-J."/>
            <person name="Hsiao S.-H."/>
            <person name="Tseng I.C."/>
            <person name="Hsing Y.-I.C."/>
            <person name="Wu H.-P."/>
            <person name="Chen C.-S."/>
            <person name="Shaw J.-F."/>
            <person name="Wu J."/>
            <person name="Matsumoto T."/>
            <person name="Sasaki T."/>
            <person name="Chen H.-C."/>
            <person name="Chow T.-Y."/>
        </authorList>
    </citation>
    <scope>NUCLEOTIDE SEQUENCE [LARGE SCALE GENOMIC DNA]</scope>
    <source>
        <strain>cv. Nipponbare</strain>
    </source>
</reference>
<reference key="2">
    <citation type="journal article" date="2005" name="Nature">
        <title>The map-based sequence of the rice genome.</title>
        <authorList>
            <consortium name="International rice genome sequencing project (IRGSP)"/>
        </authorList>
    </citation>
    <scope>NUCLEOTIDE SEQUENCE [LARGE SCALE GENOMIC DNA]</scope>
    <source>
        <strain>cv. Nipponbare</strain>
    </source>
</reference>
<reference key="3">
    <citation type="journal article" date="2013" name="Rice">
        <title>Improvement of the Oryza sativa Nipponbare reference genome using next generation sequence and optical map data.</title>
        <authorList>
            <person name="Kawahara Y."/>
            <person name="de la Bastide M."/>
            <person name="Hamilton J.P."/>
            <person name="Kanamori H."/>
            <person name="McCombie W.R."/>
            <person name="Ouyang S."/>
            <person name="Schwartz D.C."/>
            <person name="Tanaka T."/>
            <person name="Wu J."/>
            <person name="Zhou S."/>
            <person name="Childs K.L."/>
            <person name="Davidson R.M."/>
            <person name="Lin H."/>
            <person name="Quesada-Ocampo L."/>
            <person name="Vaillancourt B."/>
            <person name="Sakai H."/>
            <person name="Lee S.S."/>
            <person name="Kim J."/>
            <person name="Numa H."/>
            <person name="Itoh T."/>
            <person name="Buell C.R."/>
            <person name="Matsumoto T."/>
        </authorList>
    </citation>
    <scope>GENOME REANNOTATION</scope>
    <source>
        <strain>cv. Nipponbare</strain>
    </source>
</reference>
<reference key="4">
    <citation type="journal article" date="2006" name="BMC Plant Biol.">
        <title>Analysis of rice glycosyl hydrolase family 1 and expression of Os4bglu12 beta-glucosidase.</title>
        <authorList>
            <person name="Opassiri R."/>
            <person name="Pomthong B."/>
            <person name="Onkoksoong T."/>
            <person name="Akiyama T."/>
            <person name="Esen A."/>
            <person name="Ketudat Cairns J.R."/>
        </authorList>
    </citation>
    <scope>GENE FAMILY</scope>
    <scope>NOMENCLATURE</scope>
</reference>